<evidence type="ECO:0000250" key="1">
    <source>
        <dbReference type="UniProtKB" id="E9PV24"/>
    </source>
</evidence>
<evidence type="ECO:0000250" key="2">
    <source>
        <dbReference type="UniProtKB" id="P02675"/>
    </source>
</evidence>
<evidence type="ECO:0000250" key="3">
    <source>
        <dbReference type="UniProtKB" id="P02676"/>
    </source>
</evidence>
<evidence type="ECO:0000256" key="4">
    <source>
        <dbReference type="SAM" id="MobiDB-lite"/>
    </source>
</evidence>
<evidence type="ECO:0000269" key="5">
    <source ref="1"/>
</evidence>
<protein>
    <recommendedName>
        <fullName>Fibrinogen beta chain</fullName>
    </recommendedName>
    <component>
        <recommendedName>
            <fullName>Fibrinopeptide B</fullName>
        </recommendedName>
    </component>
</protein>
<feature type="peptide" id="PRO_0000009079" description="Fibrinopeptide B">
    <location>
        <begin position="1"/>
        <end position="21"/>
    </location>
</feature>
<feature type="region of interest" description="Disordered" evidence="4">
    <location>
        <begin position="1"/>
        <end position="21"/>
    </location>
</feature>
<feature type="compositionally biased region" description="Acidic residues" evidence="4">
    <location>
        <begin position="1"/>
        <end position="11"/>
    </location>
</feature>
<feature type="compositionally biased region" description="Basic and acidic residues" evidence="4">
    <location>
        <begin position="12"/>
        <end position="21"/>
    </location>
</feature>
<feature type="modified residue" description="Pyrrolidone carboxylic acid" evidence="5">
    <location>
        <position position="1"/>
    </location>
</feature>
<feature type="modified residue" description="Sulfotyrosine" evidence="5">
    <location>
        <position position="6"/>
    </location>
</feature>
<feature type="glycosylation site" description="O-linked (GalNAc...) threonine" evidence="3">
    <location>
        <position position="4"/>
    </location>
</feature>
<feature type="non-terminal residue">
    <location>
        <position position="21"/>
    </location>
</feature>
<comment type="function">
    <text evidence="1">Cleaved by the protease thrombin to yield monomers which, together with fibrinogen alpha (FGA) and fibrinogen gamma (FGG), polymerize to form an insoluble fibrin matrix. Fibrin has a major function in hemostasis as one of the primary components of blood clots. In addition, functions during the early stages of wound repair to stabilize the lesion and guide cell migration during re-epithelialization. Was originally thought to be essential for platelet aggregation, based on in vitro studies using anticoagulated blood. However subsequent studies have shown that it is not absolutely required for thrombus formation in vivo. Enhances expression of SELP in activated platelets. Maternal fibrinogen is essential for successful pregnancy. Fibrin deposition is also associated with infection, where it protects against IFNG-mediated hemorrhage. May also facilitate the antibacterial immune response via both innate and T-cell mediated pathways.</text>
</comment>
<comment type="subunit">
    <text evidence="2">Heterohexamer; disulfide linked. Contains 2 sets of 3 non-identical chains (alpha, beta and gamma). The 2 heterotrimers are in head to head conformation with the N-termini in a small central domain (By similarity).</text>
</comment>
<comment type="subcellular location">
    <subcellularLocation>
        <location>Secreted</location>
    </subcellularLocation>
</comment>
<comment type="domain">
    <text evidence="2">A long coiled coil structure formed by 3 polypeptide chains connects the central nodule to the C-terminal domains (distal nodules). The long C-terminal ends of the alpha chains fold back, contributing a fourth strand to the coiled coil structure.</text>
</comment>
<comment type="PTM">
    <text>Conversion of fibrinogen to fibrin is triggered by thrombin, which cleaves fibrinopeptides A and B from alpha and beta chains, and thus exposes the N-terminal polymerization sites responsible for the formation of the soft clot.</text>
</comment>
<keyword id="KW-1064">Adaptive immunity</keyword>
<keyword id="KW-0094">Blood coagulation</keyword>
<keyword id="KW-0175">Coiled coil</keyword>
<keyword id="KW-0903">Direct protein sequencing</keyword>
<keyword id="KW-1015">Disulfide bond</keyword>
<keyword id="KW-0325">Glycoprotein</keyword>
<keyword id="KW-0356">Hemostasis</keyword>
<keyword id="KW-0391">Immunity</keyword>
<keyword id="KW-0399">Innate immunity</keyword>
<keyword id="KW-0873">Pyrrolidone carboxylic acid</keyword>
<keyword id="KW-0964">Secreted</keyword>
<keyword id="KW-0765">Sulfation</keyword>
<dbReference type="GlyCosmos" id="P14475">
    <property type="glycosylation" value="1 site, No reported glycans"/>
</dbReference>
<dbReference type="GO" id="GO:0005576">
    <property type="term" value="C:extracellular region"/>
    <property type="evidence" value="ECO:0007669"/>
    <property type="project" value="UniProtKB-SubCell"/>
</dbReference>
<dbReference type="GO" id="GO:0002250">
    <property type="term" value="P:adaptive immune response"/>
    <property type="evidence" value="ECO:0007669"/>
    <property type="project" value="UniProtKB-KW"/>
</dbReference>
<dbReference type="GO" id="GO:0007596">
    <property type="term" value="P:blood coagulation"/>
    <property type="evidence" value="ECO:0007669"/>
    <property type="project" value="UniProtKB-KW"/>
</dbReference>
<dbReference type="GO" id="GO:0045087">
    <property type="term" value="P:innate immune response"/>
    <property type="evidence" value="ECO:0007669"/>
    <property type="project" value="UniProtKB-KW"/>
</dbReference>
<gene>
    <name type="primary">FGB</name>
</gene>
<accession>P14475</accession>
<proteinExistence type="evidence at protein level"/>
<name>FIBB_MUNMU</name>
<sequence>QHSTDYDEVEDDRAKLHLDAR</sequence>
<organism>
    <name type="scientific">Muntiacus muntjak</name>
    <name type="common">Barking deer</name>
    <name type="synonym">Indian muntjac</name>
    <dbReference type="NCBI Taxonomy" id="9888"/>
    <lineage>
        <taxon>Eukaryota</taxon>
        <taxon>Metazoa</taxon>
        <taxon>Chordata</taxon>
        <taxon>Craniata</taxon>
        <taxon>Vertebrata</taxon>
        <taxon>Euteleostomi</taxon>
        <taxon>Mammalia</taxon>
        <taxon>Eutheria</taxon>
        <taxon>Laurasiatheria</taxon>
        <taxon>Artiodactyla</taxon>
        <taxon>Ruminantia</taxon>
        <taxon>Pecora</taxon>
        <taxon>Cervidae</taxon>
        <taxon>Muntiacinae</taxon>
        <taxon>Muntiacus</taxon>
    </lineage>
</organism>
<reference key="1">
    <citation type="journal article" date="1967" name="Arch. Biochem. Biophys.">
        <title>Amino acid sequence studies on artiodacty fibrinopeptides.</title>
        <authorList>
            <person name="Mross G.A."/>
            <person name="Doolittle R.F."/>
        </authorList>
    </citation>
    <scope>PROTEIN SEQUENCE</scope>
    <scope>PYROGLUTAMATE FORMATION AT GLN-1</scope>
    <scope>SULFATION AT TYR-6</scope>
</reference>